<sequence>MTQPQRPSIYFNVHLVSDSTGETLNAIQRAACAQFENVQPLEHNYYLVRSERQLERVMKEIEAAPGVVWYTISDGALRGRLEAFCRERSIPTLPVLDPSIAMLSRHLGVAPNNRVAGQHALDEDYFERMEAINFTLAHDDGQNVESLIGADVILLGVSRTSKTPTCVYLANRKVRAGNIPLVPGVPLPDFMEKMGDKGPLVVGLKISAERLVQIRRQRLISLNQDEITEYADEEAVRDEITQANRLFQRNGWKTIDVSRRSVEETAAGILNMLHERWGHS</sequence>
<accession>Q0C6A8</accession>
<feature type="chain" id="PRO_0000316682" description="Putative pyruvate, phosphate dikinase regulatory protein">
    <location>
        <begin position="1"/>
        <end position="280"/>
    </location>
</feature>
<feature type="binding site" evidence="1">
    <location>
        <begin position="156"/>
        <end position="163"/>
    </location>
    <ligand>
        <name>ADP</name>
        <dbReference type="ChEBI" id="CHEBI:456216"/>
    </ligand>
</feature>
<reference key="1">
    <citation type="journal article" date="2006" name="J. Bacteriol.">
        <title>Comparative genomic evidence for a close relationship between the dimorphic prosthecate bacteria Hyphomonas neptunium and Caulobacter crescentus.</title>
        <authorList>
            <person name="Badger J.H."/>
            <person name="Hoover T.R."/>
            <person name="Brun Y.V."/>
            <person name="Weiner R.M."/>
            <person name="Laub M.T."/>
            <person name="Alexandre G."/>
            <person name="Mrazek J."/>
            <person name="Ren Q."/>
            <person name="Paulsen I.T."/>
            <person name="Nelson K.E."/>
            <person name="Khouri H.M."/>
            <person name="Radune D."/>
            <person name="Sosa J."/>
            <person name="Dodson R.J."/>
            <person name="Sullivan S.A."/>
            <person name="Rosovitz M.J."/>
            <person name="Madupu R."/>
            <person name="Brinkac L.M."/>
            <person name="Durkin A.S."/>
            <person name="Daugherty S.C."/>
            <person name="Kothari S.P."/>
            <person name="Giglio M.G."/>
            <person name="Zhou L."/>
            <person name="Haft D.H."/>
            <person name="Selengut J.D."/>
            <person name="Davidsen T.M."/>
            <person name="Yang Q."/>
            <person name="Zafar N."/>
            <person name="Ward N.L."/>
        </authorList>
    </citation>
    <scope>NUCLEOTIDE SEQUENCE [LARGE SCALE GENOMIC DNA]</scope>
    <source>
        <strain>ATCC 15444</strain>
    </source>
</reference>
<gene>
    <name type="ordered locus">HNE_0001</name>
</gene>
<evidence type="ECO:0000255" key="1">
    <source>
        <dbReference type="HAMAP-Rule" id="MF_00921"/>
    </source>
</evidence>
<dbReference type="EC" id="2.7.11.32" evidence="1"/>
<dbReference type="EC" id="2.7.4.27" evidence="1"/>
<dbReference type="EMBL" id="CP000158">
    <property type="protein sequence ID" value="ABI75675.1"/>
    <property type="molecule type" value="Genomic_DNA"/>
</dbReference>
<dbReference type="RefSeq" id="WP_011645035.1">
    <property type="nucleotide sequence ID" value="NC_008358.1"/>
</dbReference>
<dbReference type="SMR" id="Q0C6A8"/>
<dbReference type="STRING" id="228405.HNE_0001"/>
<dbReference type="KEGG" id="hne:HNE_0001"/>
<dbReference type="eggNOG" id="COG1806">
    <property type="taxonomic scope" value="Bacteria"/>
</dbReference>
<dbReference type="HOGENOM" id="CLU_046206_2_0_5"/>
<dbReference type="Proteomes" id="UP000001959">
    <property type="component" value="Chromosome"/>
</dbReference>
<dbReference type="GO" id="GO:0043531">
    <property type="term" value="F:ADP binding"/>
    <property type="evidence" value="ECO:0007669"/>
    <property type="project" value="UniProtKB-UniRule"/>
</dbReference>
<dbReference type="GO" id="GO:0005524">
    <property type="term" value="F:ATP binding"/>
    <property type="evidence" value="ECO:0007669"/>
    <property type="project" value="InterPro"/>
</dbReference>
<dbReference type="GO" id="GO:0016776">
    <property type="term" value="F:phosphotransferase activity, phosphate group as acceptor"/>
    <property type="evidence" value="ECO:0007669"/>
    <property type="project" value="UniProtKB-UniRule"/>
</dbReference>
<dbReference type="GO" id="GO:0004674">
    <property type="term" value="F:protein serine/threonine kinase activity"/>
    <property type="evidence" value="ECO:0007669"/>
    <property type="project" value="UniProtKB-UniRule"/>
</dbReference>
<dbReference type="HAMAP" id="MF_00921">
    <property type="entry name" value="PDRP"/>
    <property type="match status" value="1"/>
</dbReference>
<dbReference type="InterPro" id="IPR005177">
    <property type="entry name" value="Kinase-pyrophosphorylase"/>
</dbReference>
<dbReference type="InterPro" id="IPR026565">
    <property type="entry name" value="PPDK_reg"/>
</dbReference>
<dbReference type="NCBIfam" id="NF003742">
    <property type="entry name" value="PRK05339.1"/>
    <property type="match status" value="1"/>
</dbReference>
<dbReference type="PANTHER" id="PTHR31756">
    <property type="entry name" value="PYRUVATE, PHOSPHATE DIKINASE REGULATORY PROTEIN 1, CHLOROPLASTIC"/>
    <property type="match status" value="1"/>
</dbReference>
<dbReference type="PANTHER" id="PTHR31756:SF3">
    <property type="entry name" value="PYRUVATE, PHOSPHATE DIKINASE REGULATORY PROTEIN 1, CHLOROPLASTIC"/>
    <property type="match status" value="1"/>
</dbReference>
<dbReference type="Pfam" id="PF03618">
    <property type="entry name" value="Kinase-PPPase"/>
    <property type="match status" value="1"/>
</dbReference>
<protein>
    <recommendedName>
        <fullName evidence="1">Putative pyruvate, phosphate dikinase regulatory protein</fullName>
        <shortName evidence="1">PPDK regulatory protein</shortName>
        <ecNumber evidence="1">2.7.11.32</ecNumber>
        <ecNumber evidence="1">2.7.4.27</ecNumber>
    </recommendedName>
</protein>
<comment type="function">
    <text evidence="1">Bifunctional serine/threonine kinase and phosphorylase involved in the regulation of the pyruvate, phosphate dikinase (PPDK) by catalyzing its phosphorylation/dephosphorylation.</text>
</comment>
<comment type="catalytic activity">
    <reaction evidence="1">
        <text>N(tele)-phospho-L-histidyl/L-threonyl-[pyruvate, phosphate dikinase] + ADP = N(tele)-phospho-L-histidyl/O-phospho-L-threonyl-[pyruvate, phosphate dikinase] + AMP + H(+)</text>
        <dbReference type="Rhea" id="RHEA:43692"/>
        <dbReference type="Rhea" id="RHEA-COMP:10650"/>
        <dbReference type="Rhea" id="RHEA-COMP:10651"/>
        <dbReference type="ChEBI" id="CHEBI:15378"/>
        <dbReference type="ChEBI" id="CHEBI:30013"/>
        <dbReference type="ChEBI" id="CHEBI:61977"/>
        <dbReference type="ChEBI" id="CHEBI:83586"/>
        <dbReference type="ChEBI" id="CHEBI:456215"/>
        <dbReference type="ChEBI" id="CHEBI:456216"/>
        <dbReference type="EC" id="2.7.11.32"/>
    </reaction>
</comment>
<comment type="catalytic activity">
    <reaction evidence="1">
        <text>N(tele)-phospho-L-histidyl/O-phospho-L-threonyl-[pyruvate, phosphate dikinase] + phosphate + H(+) = N(tele)-phospho-L-histidyl/L-threonyl-[pyruvate, phosphate dikinase] + diphosphate</text>
        <dbReference type="Rhea" id="RHEA:43696"/>
        <dbReference type="Rhea" id="RHEA-COMP:10650"/>
        <dbReference type="Rhea" id="RHEA-COMP:10651"/>
        <dbReference type="ChEBI" id="CHEBI:15378"/>
        <dbReference type="ChEBI" id="CHEBI:30013"/>
        <dbReference type="ChEBI" id="CHEBI:33019"/>
        <dbReference type="ChEBI" id="CHEBI:43474"/>
        <dbReference type="ChEBI" id="CHEBI:61977"/>
        <dbReference type="ChEBI" id="CHEBI:83586"/>
        <dbReference type="EC" id="2.7.4.27"/>
    </reaction>
</comment>
<comment type="similarity">
    <text evidence="1">Belongs to the pyruvate, phosphate/water dikinase regulatory protein family. PDRP subfamily.</text>
</comment>
<organism>
    <name type="scientific">Hyphomonas neptunium (strain ATCC 15444)</name>
    <dbReference type="NCBI Taxonomy" id="228405"/>
    <lineage>
        <taxon>Bacteria</taxon>
        <taxon>Pseudomonadati</taxon>
        <taxon>Pseudomonadota</taxon>
        <taxon>Alphaproteobacteria</taxon>
        <taxon>Hyphomonadales</taxon>
        <taxon>Hyphomonadaceae</taxon>
        <taxon>Hyphomonas</taxon>
    </lineage>
</organism>
<name>PDRP_HYPNA</name>
<proteinExistence type="inferred from homology"/>
<keyword id="KW-0418">Kinase</keyword>
<keyword id="KW-0547">Nucleotide-binding</keyword>
<keyword id="KW-1185">Reference proteome</keyword>
<keyword id="KW-0723">Serine/threonine-protein kinase</keyword>
<keyword id="KW-0808">Transferase</keyword>